<feature type="chain" id="PRO_0000393852" description="Methylthioribulose-1-phosphate dehydratase">
    <location>
        <begin position="1"/>
        <end position="273"/>
    </location>
</feature>
<feature type="region of interest" description="Disordered" evidence="2">
    <location>
        <begin position="1"/>
        <end position="27"/>
    </location>
</feature>
<feature type="active site" description="Proton donor/acceptor" evidence="1">
    <location>
        <position position="168"/>
    </location>
</feature>
<feature type="binding site" evidence="1">
    <location>
        <position position="114"/>
    </location>
    <ligand>
        <name>substrate</name>
    </ligand>
</feature>
<feature type="binding site" evidence="1">
    <location>
        <position position="132"/>
    </location>
    <ligand>
        <name>Zn(2+)</name>
        <dbReference type="ChEBI" id="CHEBI:29105"/>
    </ligand>
</feature>
<feature type="binding site" evidence="1">
    <location>
        <position position="134"/>
    </location>
    <ligand>
        <name>Zn(2+)</name>
        <dbReference type="ChEBI" id="CHEBI:29105"/>
    </ligand>
</feature>
<feature type="binding site" evidence="1">
    <location>
        <position position="225"/>
    </location>
    <ligand>
        <name>Zn(2+)</name>
        <dbReference type="ChEBI" id="CHEBI:29105"/>
    </ligand>
</feature>
<name>MTNB_SORMK</name>
<reference key="1">
    <citation type="journal article" date="2010" name="PLoS Genet.">
        <title>De novo assembly of a 40 Mb eukaryotic genome from short sequence reads: Sordaria macrospora, a model organism for fungal morphogenesis.</title>
        <authorList>
            <person name="Nowrousian M."/>
            <person name="Stajich J.E."/>
            <person name="Chu M."/>
            <person name="Engh I."/>
            <person name="Espagne E."/>
            <person name="Halliday K."/>
            <person name="Kamerewerd J."/>
            <person name="Kempken F."/>
            <person name="Knab B."/>
            <person name="Kuo H.-C."/>
            <person name="Osiewacz H.D."/>
            <person name="Poeggeler S."/>
            <person name="Read N.D."/>
            <person name="Seiler S."/>
            <person name="Smith K.M."/>
            <person name="Zickler D."/>
            <person name="Kueck U."/>
            <person name="Freitag M."/>
        </authorList>
    </citation>
    <scope>NUCLEOTIDE SEQUENCE [LARGE SCALE GENOMIC DNA]</scope>
    <source>
        <strain>ATCC MYA-333 / DSM 997 / K(L3346) / K-hell</strain>
    </source>
</reference>
<protein>
    <recommendedName>
        <fullName evidence="1">Methylthioribulose-1-phosphate dehydratase</fullName>
        <shortName evidence="1">MTRu-1-P dehydratase</shortName>
        <ecNumber evidence="1">4.2.1.109</ecNumber>
    </recommendedName>
</protein>
<organism>
    <name type="scientific">Sordaria macrospora (strain ATCC MYA-333 / DSM 997 / K(L3346) / K-hell)</name>
    <dbReference type="NCBI Taxonomy" id="771870"/>
    <lineage>
        <taxon>Eukaryota</taxon>
        <taxon>Fungi</taxon>
        <taxon>Dikarya</taxon>
        <taxon>Ascomycota</taxon>
        <taxon>Pezizomycotina</taxon>
        <taxon>Sordariomycetes</taxon>
        <taxon>Sordariomycetidae</taxon>
        <taxon>Sordariales</taxon>
        <taxon>Sordariaceae</taxon>
        <taxon>Sordaria</taxon>
    </lineage>
</organism>
<gene>
    <name evidence="1" type="primary">MDE1</name>
    <name type="ORF">SMAC_04853</name>
</gene>
<sequence length="273" mass="30307">MCPTCPPSAASASSENNNTDNNDHLVLSSDSSHPANLIPALCAKFWTLGWVTGTGGGASIRDNDLVYLAPSGVQKELMKPEDIYVLSLAAQATSPNPKQRVYLRSPANYKPSQCTPLFLAAFTKRNAGCCIHTHSHWAVLVTLLLERERSSKEGDEEKGKVFEINNIEQIKGFGRGFGKSGNLGYHDTLRIPVIENTAHEEDLTEFLEEAMDKYPDTYAVLVRRHGVYVWGENVHKAKTMCESLDYLFQLAVEMKQLGLPWITDIEPTIPTRK</sequence>
<accession>D1ZJC1</accession>
<accession>F7VLT3</accession>
<proteinExistence type="inferred from homology"/>
<comment type="function">
    <text evidence="1">Catalyzes the dehydration of methylthioribulose-1-phosphate (MTRu-1-P) into 2,3-diketo-5-methylthiopentyl-1-phosphate (DK-MTP-1-P).</text>
</comment>
<comment type="catalytic activity">
    <reaction evidence="1">
        <text>5-(methylsulfanyl)-D-ribulose 1-phosphate = 5-methylsulfanyl-2,3-dioxopentyl phosphate + H2O</text>
        <dbReference type="Rhea" id="RHEA:15549"/>
        <dbReference type="ChEBI" id="CHEBI:15377"/>
        <dbReference type="ChEBI" id="CHEBI:58548"/>
        <dbReference type="ChEBI" id="CHEBI:58828"/>
        <dbReference type="EC" id="4.2.1.109"/>
    </reaction>
</comment>
<comment type="cofactor">
    <cofactor evidence="1">
        <name>Zn(2+)</name>
        <dbReference type="ChEBI" id="CHEBI:29105"/>
    </cofactor>
    <text evidence="1">Binds 1 zinc ion per subunit.</text>
</comment>
<comment type="pathway">
    <text evidence="1">Amino-acid biosynthesis; L-methionine biosynthesis via salvage pathway; L-methionine from S-methyl-5-thio-alpha-D-ribose 1-phosphate: step 2/6.</text>
</comment>
<comment type="subcellular location">
    <subcellularLocation>
        <location evidence="1">Cytoplasm</location>
    </subcellularLocation>
</comment>
<comment type="similarity">
    <text evidence="1">Belongs to the aldolase class II family. MtnB subfamily.</text>
</comment>
<keyword id="KW-0028">Amino-acid biosynthesis</keyword>
<keyword id="KW-0963">Cytoplasm</keyword>
<keyword id="KW-0456">Lyase</keyword>
<keyword id="KW-0479">Metal-binding</keyword>
<keyword id="KW-0486">Methionine biosynthesis</keyword>
<keyword id="KW-1185">Reference proteome</keyword>
<keyword id="KW-0862">Zinc</keyword>
<evidence type="ECO:0000255" key="1">
    <source>
        <dbReference type="HAMAP-Rule" id="MF_03116"/>
    </source>
</evidence>
<evidence type="ECO:0000256" key="2">
    <source>
        <dbReference type="SAM" id="MobiDB-lite"/>
    </source>
</evidence>
<dbReference type="EC" id="4.2.1.109" evidence="1"/>
<dbReference type="EMBL" id="CABT02000001">
    <property type="protein sequence ID" value="CCC06461.1"/>
    <property type="molecule type" value="Genomic_DNA"/>
</dbReference>
<dbReference type="RefSeq" id="XP_003347546.1">
    <property type="nucleotide sequence ID" value="XM_003347498.1"/>
</dbReference>
<dbReference type="SMR" id="D1ZJC1"/>
<dbReference type="FunCoup" id="D1ZJC1">
    <property type="interactions" value="244"/>
</dbReference>
<dbReference type="STRING" id="771870.D1ZJC1"/>
<dbReference type="GeneID" id="10804978"/>
<dbReference type="KEGG" id="smp:10804978"/>
<dbReference type="VEuPathDB" id="FungiDB:SMAC_04853"/>
<dbReference type="eggNOG" id="KOG2631">
    <property type="taxonomic scope" value="Eukaryota"/>
</dbReference>
<dbReference type="HOGENOM" id="CLU_006033_4_0_1"/>
<dbReference type="InParanoid" id="D1ZJC1"/>
<dbReference type="OMA" id="WFPGTSG"/>
<dbReference type="OrthoDB" id="191080at2759"/>
<dbReference type="UniPathway" id="UPA00904">
    <property type="reaction ID" value="UER00875"/>
</dbReference>
<dbReference type="Proteomes" id="UP000001881">
    <property type="component" value="Unassembled WGS sequence"/>
</dbReference>
<dbReference type="GO" id="GO:0005737">
    <property type="term" value="C:cytoplasm"/>
    <property type="evidence" value="ECO:0007669"/>
    <property type="project" value="UniProtKB-SubCell"/>
</dbReference>
<dbReference type="GO" id="GO:0046570">
    <property type="term" value="F:methylthioribulose 1-phosphate dehydratase activity"/>
    <property type="evidence" value="ECO:0007669"/>
    <property type="project" value="UniProtKB-UniRule"/>
</dbReference>
<dbReference type="GO" id="GO:0008270">
    <property type="term" value="F:zinc ion binding"/>
    <property type="evidence" value="ECO:0007669"/>
    <property type="project" value="UniProtKB-UniRule"/>
</dbReference>
<dbReference type="GO" id="GO:0019509">
    <property type="term" value="P:L-methionine salvage from methylthioadenosine"/>
    <property type="evidence" value="ECO:0007669"/>
    <property type="project" value="UniProtKB-UniRule"/>
</dbReference>
<dbReference type="FunFam" id="3.40.225.10:FF:000003">
    <property type="entry name" value="Methylthioribulose-1-phosphate dehydratase"/>
    <property type="match status" value="1"/>
</dbReference>
<dbReference type="Gene3D" id="3.40.225.10">
    <property type="entry name" value="Class II aldolase/adducin N-terminal domain"/>
    <property type="match status" value="1"/>
</dbReference>
<dbReference type="HAMAP" id="MF_03116">
    <property type="entry name" value="Salvage_MtnB_euk"/>
    <property type="match status" value="1"/>
</dbReference>
<dbReference type="InterPro" id="IPR001303">
    <property type="entry name" value="Aldolase_II/adducin_N"/>
</dbReference>
<dbReference type="InterPro" id="IPR036409">
    <property type="entry name" value="Aldolase_II/adducin_N_sf"/>
</dbReference>
<dbReference type="InterPro" id="IPR017714">
    <property type="entry name" value="MethylthioRu-1-P_deHdtase_MtnB"/>
</dbReference>
<dbReference type="InterPro" id="IPR027514">
    <property type="entry name" value="Salvage_MtnB_euk"/>
</dbReference>
<dbReference type="NCBIfam" id="TIGR03328">
    <property type="entry name" value="salvage_mtnB"/>
    <property type="match status" value="1"/>
</dbReference>
<dbReference type="PANTHER" id="PTHR10640">
    <property type="entry name" value="METHYLTHIORIBULOSE-1-PHOSPHATE DEHYDRATASE"/>
    <property type="match status" value="1"/>
</dbReference>
<dbReference type="PANTHER" id="PTHR10640:SF7">
    <property type="entry name" value="METHYLTHIORIBULOSE-1-PHOSPHATE DEHYDRATASE"/>
    <property type="match status" value="1"/>
</dbReference>
<dbReference type="Pfam" id="PF00596">
    <property type="entry name" value="Aldolase_II"/>
    <property type="match status" value="1"/>
</dbReference>
<dbReference type="SMART" id="SM01007">
    <property type="entry name" value="Aldolase_II"/>
    <property type="match status" value="1"/>
</dbReference>
<dbReference type="SUPFAM" id="SSF53639">
    <property type="entry name" value="AraD/HMP-PK domain-like"/>
    <property type="match status" value="1"/>
</dbReference>